<gene>
    <name evidence="10 11" type="primary">ARF2B</name>
    <name evidence="9" type="synonym">ARF11</name>
    <name evidence="12" type="ordered locus">Solyc12g042070</name>
</gene>
<evidence type="ECO:0000255" key="1"/>
<evidence type="ECO:0000255" key="2">
    <source>
        <dbReference type="PROSITE-ProRule" id="PRU00326"/>
    </source>
</evidence>
<evidence type="ECO:0000255" key="3">
    <source>
        <dbReference type="PROSITE-ProRule" id="PRU01081"/>
    </source>
</evidence>
<evidence type="ECO:0000255" key="4">
    <source>
        <dbReference type="RuleBase" id="RU004561"/>
    </source>
</evidence>
<evidence type="ECO:0000256" key="5">
    <source>
        <dbReference type="SAM" id="MobiDB-lite"/>
    </source>
</evidence>
<evidence type="ECO:0000269" key="6">
    <source>
    </source>
</evidence>
<evidence type="ECO:0000269" key="7">
    <source>
    </source>
</evidence>
<evidence type="ECO:0000269" key="8">
    <source>
    </source>
</evidence>
<evidence type="ECO:0000303" key="9">
    <source>
    </source>
</evidence>
<evidence type="ECO:0000303" key="10">
    <source>
    </source>
</evidence>
<evidence type="ECO:0000303" key="11">
    <source>
    </source>
</evidence>
<evidence type="ECO:0000305" key="12">
    <source>
    </source>
</evidence>
<feature type="chain" id="PRO_0000441019" description="Auxin response factor 2B">
    <location>
        <begin position="1"/>
        <end position="828"/>
    </location>
</feature>
<feature type="domain" description="PB1" evidence="3">
    <location>
        <begin position="703"/>
        <end position="786"/>
    </location>
</feature>
<feature type="DNA-binding region" description="TF-B3" evidence="2">
    <location>
        <begin position="128"/>
        <end position="230"/>
    </location>
</feature>
<feature type="region of interest" description="Disordered" evidence="5">
    <location>
        <begin position="348"/>
        <end position="397"/>
    </location>
</feature>
<feature type="region of interest" description="Disordered" evidence="5">
    <location>
        <begin position="681"/>
        <end position="703"/>
    </location>
</feature>
<feature type="region of interest" description="Disordered" evidence="5">
    <location>
        <begin position="791"/>
        <end position="828"/>
    </location>
</feature>
<feature type="compositionally biased region" description="Pro residues" evidence="5">
    <location>
        <begin position="360"/>
        <end position="370"/>
    </location>
</feature>
<feature type="compositionally biased region" description="Polar residues" evidence="5">
    <location>
        <begin position="380"/>
        <end position="390"/>
    </location>
</feature>
<feature type="compositionally biased region" description="Polar residues" evidence="5">
    <location>
        <begin position="791"/>
        <end position="806"/>
    </location>
</feature>
<comment type="function">
    <text evidence="4 7 8">Auxin response factors (ARFs) are transcriptional factors that binds specifically to the DNA sequence 5'-TGTCTC-3' found in the auxin-responsive promoter elements (AuxREs) (By similarity). Could act as transcriptional activator or repressor. Involved in the control of fruit ripening process. Regulates expression of a number of ripening regulators, transcription factors, and ethylene biosynthesis and signaling components (PubMed:26716451, PubMed:26959229). May act as a transcriptional repressor of auxin-responsive genes (PubMed:26716451).</text>
</comment>
<comment type="subunit">
    <text evidence="1 4">Homodimers and heterodimers.</text>
</comment>
<comment type="subcellular location">
    <subcellularLocation>
        <location evidence="1 2 4 7">Nucleus</location>
    </subcellularLocation>
</comment>
<comment type="tissue specificity">
    <text evidence="6 7">Expressed in root, leaf and stem (PubMed:21735233, PubMed:26716451). Also expressed in flower and fruit (PubMed:26716451). Expressed in flower buds about three days before opening including stamen, petal and sepal with the highest in ovary (PubMed:21735233).</text>
</comment>
<comment type="developmental stage">
    <text evidence="6">Expression increases during floral development. Expressed during ovary development with the highest expression on the third day after the flower fully opened.</text>
</comment>
<comment type="induction">
    <text evidence="7">By tomato fruit ripening. Expression is up-regulated by plant hormone auxin in tomato fruits.</text>
</comment>
<comment type="disruption phenotype">
    <text evidence="7 8">Simultaneous RNAi-mediated silencing of both ARF2A and ARF2B results in severe defects in tomato fruit ripening process (PubMed:26716451, PubMed:26959229). Plants form triple cotyledons and have enhanced root branching. Tomatoes have reduced pigment accumulation, enhanced fruit firmness, low climacteric ethylene production and inability to ripen upon exogenous application of ethylene (PubMed:26716451). The fruits are either parthenocarpic or contain only a few seeds, and the time from anthesis to breaker (Br) developmental stage is significantly extended compared to wild type fruit (PubMed:26959229). Altered expression of ethylene biosynthesis, signaling and ethylene response factor (ERF) genes and genes involved in the carotenoid pathway and ripening-related cell wall metabolism. Up-regulates auxin-responsive genes (PubMed:26716451). Down-regulated expression levels of ripening regulators, including RIN, AP2a, NOR, TAGL1, ETR3, ERF1 and CNR at the red (R) fruit stage. Expression levels of hormones such as abscisates, cytokinins and salicyclic acid are altered, and levels of carotenoids phytoene, phytofluene and lycopene are reduced in red fruits. Gibberellic acid (GA) and auxin expression levels are unchanged. Compounds normally reduced upon ripening show higher levels than wild type fruit as a result of simultaneous silencing of ARF2A and ARF2B (PubMed:26959229).</text>
</comment>
<comment type="similarity">
    <text evidence="4">Belongs to the ARF family.</text>
</comment>
<proteinExistence type="evidence at transcript level"/>
<name>ARF2B_SOLLC</name>
<keyword id="KW-0927">Auxin signaling pathway</keyword>
<keyword id="KW-0217">Developmental protein</keyword>
<keyword id="KW-0238">DNA-binding</keyword>
<keyword id="KW-0292">Fruit ripening</keyword>
<keyword id="KW-0539">Nucleus</keyword>
<keyword id="KW-1185">Reference proteome</keyword>
<keyword id="KW-0804">Transcription</keyword>
<keyword id="KW-0805">Transcription regulation</keyword>
<accession>K4DF01</accession>
<protein>
    <recommendedName>
        <fullName evidence="10 11">Auxin response factor 2B</fullName>
        <shortName evidence="10">SlARF2B</shortName>
    </recommendedName>
</protein>
<organism>
    <name type="scientific">Solanum lycopersicum</name>
    <name type="common">Tomato</name>
    <name type="synonym">Lycopersicon esculentum</name>
    <dbReference type="NCBI Taxonomy" id="4081"/>
    <lineage>
        <taxon>Eukaryota</taxon>
        <taxon>Viridiplantae</taxon>
        <taxon>Streptophyta</taxon>
        <taxon>Embryophyta</taxon>
        <taxon>Tracheophyta</taxon>
        <taxon>Spermatophyta</taxon>
        <taxon>Magnoliopsida</taxon>
        <taxon>eudicotyledons</taxon>
        <taxon>Gunneridae</taxon>
        <taxon>Pentapetalae</taxon>
        <taxon>asterids</taxon>
        <taxon>lamiids</taxon>
        <taxon>Solanales</taxon>
        <taxon>Solanaceae</taxon>
        <taxon>Solanoideae</taxon>
        <taxon>Solaneae</taxon>
        <taxon>Solanum</taxon>
        <taxon>Solanum subgen. Lycopersicon</taxon>
    </lineage>
</organism>
<sequence length="828" mass="92468">MATSENCRNAAGAGKVDAEKALYTELWRACAGPLVTVPCEGELVFYFPQGHIEQVEASTNQASDQQMPVYNLPSKILCRVINVLLKAEPDTDEVYAQVTLLPEPNQDENVVSKEPMPSPPPRFHVHSFCKTLTASDTSTHGGFSVLRRHADECLPPLDMSRQPPTQELVAKDLHANEWRFRHIFRGQPRRHLLQSGWSVFVSSKRLVAGDAFIFLRGENGELRVGVRRAMRQQGNAPSSVISSHSMHLGVLATAWHAIQTKTLFTVYYKPRTSPADFIVPYDQYMESLKNNYSIGMRFKMRFEGEEAPEQRFTGTIVGIENADLKRWPESKWRCLKVRWDETSAIPRPDRVSPWKVEPALSPPALNPLPIPRQKRPRSNVLPSSPDSSVLTREGSSKVVVDTSQASGFSRVLQGQEISTLRGNFVENNESDSSEKPPIWQPLLDDEKADVHSASRKCISDKRLPLGRPESSFTDLLSGFGGQSSSSHGFHSPTGGQTAPASWVKRQALDKETDFSLLAKQWSLVSSGLSLNLMESGLKGADTLYQMRGTSRLNCFNEYPTFPGHRPDNQQGNWLMPPSVLPYIQMSAHSGEIMPKPMASPQPEAMKPKEGNCKLFGIPLVSKCATIDPVMLRKNSPIHSTSNMHFGIHPHQFPIIESDQRSEQSKGSKLPDDGFIVHDQEEQFQTSHPGTRDREGKGLVHSTRSCTKVHKQGTALGRSVDLAKFNNYEELIAELDHIFDFNGELKARNKNWLVVYTDDEGDMMLVGDDPWEFCGMVRKIFIYTKDEVQRMNPGTLNSKGEDNSSVAEGSDAKEVKNLQLHIDSSPEDS</sequence>
<reference key="1">
    <citation type="journal article" date="2012" name="Nature">
        <title>The tomato genome sequence provides insights into fleshy fruit evolution.</title>
        <authorList>
            <consortium name="Tomato Genome Consortium"/>
        </authorList>
    </citation>
    <scope>NUCLEOTIDE SEQUENCE [LARGE SCALE GENOMIC DNA]</scope>
    <source>
        <strain>cv. Heinz 1706</strain>
    </source>
</reference>
<reference key="2">
    <citation type="journal article" date="2011" name="Plant Cell Rep.">
        <title>Identification, isolation and expression analysis of auxin response factor (ARF) genes in Solanum lycopersicum.</title>
        <authorList>
            <person name="Wu J."/>
            <person name="Wang F."/>
            <person name="Cheng L."/>
            <person name="Kong F."/>
            <person name="Peng Z."/>
            <person name="Liu S."/>
            <person name="Yu X."/>
            <person name="Lu G."/>
        </authorList>
    </citation>
    <scope>TISSUE SPECIFICITY</scope>
    <scope>DEVELOPMENTAL STAGE</scope>
    <scope>PHYLOGENETIC ANALYSIS</scope>
</reference>
<reference key="3">
    <citation type="journal article" date="2015" name="PLoS Genet.">
        <title>Auxin response factor SlARF2 is an essential component of the regulatory mechanism controlling fruit ripening in tomato.</title>
        <authorList>
            <person name="Hao Y."/>
            <person name="Hu G."/>
            <person name="Breitel D."/>
            <person name="Liu M."/>
            <person name="Mila I."/>
            <person name="Frasse P."/>
            <person name="Fu Y."/>
            <person name="Aharoni A."/>
            <person name="Bouzayen M."/>
            <person name="Zouine M."/>
        </authorList>
    </citation>
    <scope>FUNCTION</scope>
    <scope>SUBCELLULAR LOCATION</scope>
    <scope>TISSUE SPECIFICITY</scope>
    <scope>INDUCTION</scope>
    <scope>DISRUPTION PHENOTYPE</scope>
</reference>
<reference key="4">
    <citation type="journal article" date="2016" name="PLoS Genet.">
        <title>AUXIN RESPONSE FACTOR 2 intersects hormonal signals in the regulation of tomato fruit ripening.</title>
        <authorList>
            <person name="Breitel D.A."/>
            <person name="Chappell-Maor L."/>
            <person name="Meir S."/>
            <person name="Panizel I."/>
            <person name="Puig C.P."/>
            <person name="Hao Y."/>
            <person name="Yifhar T."/>
            <person name="Yasuor H."/>
            <person name="Zouine M."/>
            <person name="Bouzayen M."/>
            <person name="Granell Richart A."/>
            <person name="Rogachev I."/>
            <person name="Aharoni A."/>
        </authorList>
    </citation>
    <scope>FUNCTION</scope>
    <scope>DISRUPTION PHENOTYPE</scope>
</reference>
<dbReference type="EMBL" id="CM001075">
    <property type="status" value="NOT_ANNOTATED_CDS"/>
    <property type="molecule type" value="Genomic_DNA"/>
</dbReference>
<dbReference type="RefSeq" id="NP_001415188.1">
    <property type="nucleotide sequence ID" value="NM_001428259.1"/>
</dbReference>
<dbReference type="RefSeq" id="XP_004252281.1">
    <property type="nucleotide sequence ID" value="XM_004252233.3"/>
</dbReference>
<dbReference type="SMR" id="K4DF01"/>
<dbReference type="FunCoup" id="K4DF01">
    <property type="interactions" value="2229"/>
</dbReference>
<dbReference type="STRING" id="4081.K4DF01"/>
<dbReference type="PaxDb" id="4081-Solyc12g042070.1.1"/>
<dbReference type="GeneID" id="101249712"/>
<dbReference type="eggNOG" id="ENOG502QRXI">
    <property type="taxonomic scope" value="Eukaryota"/>
</dbReference>
<dbReference type="HOGENOM" id="CLU_002626_2_2_1"/>
<dbReference type="InParanoid" id="K4DF01"/>
<dbReference type="OrthoDB" id="1912783at2759"/>
<dbReference type="PhylomeDB" id="K4DF01"/>
<dbReference type="Proteomes" id="UP000004994">
    <property type="component" value="Unplaced"/>
</dbReference>
<dbReference type="ExpressionAtlas" id="K4DF01">
    <property type="expression patterns" value="baseline and differential"/>
</dbReference>
<dbReference type="GO" id="GO:0005634">
    <property type="term" value="C:nucleus"/>
    <property type="evidence" value="ECO:0007669"/>
    <property type="project" value="UniProtKB-SubCell"/>
</dbReference>
<dbReference type="GO" id="GO:0003677">
    <property type="term" value="F:DNA binding"/>
    <property type="evidence" value="ECO:0007669"/>
    <property type="project" value="UniProtKB-KW"/>
</dbReference>
<dbReference type="GO" id="GO:0009734">
    <property type="term" value="P:auxin-activated signaling pathway"/>
    <property type="evidence" value="ECO:0007669"/>
    <property type="project" value="UniProtKB-KW"/>
</dbReference>
<dbReference type="GO" id="GO:0009835">
    <property type="term" value="P:fruit ripening"/>
    <property type="evidence" value="ECO:0007669"/>
    <property type="project" value="UniProtKB-KW"/>
</dbReference>
<dbReference type="GO" id="GO:0006355">
    <property type="term" value="P:regulation of DNA-templated transcription"/>
    <property type="evidence" value="ECO:0007669"/>
    <property type="project" value="InterPro"/>
</dbReference>
<dbReference type="CDD" id="cd10017">
    <property type="entry name" value="B3_DNA"/>
    <property type="match status" value="1"/>
</dbReference>
<dbReference type="FunFam" id="2.30.30.1040:FF:000001">
    <property type="entry name" value="Auxin response factor"/>
    <property type="match status" value="1"/>
</dbReference>
<dbReference type="FunFam" id="2.40.330.10:FF:000001">
    <property type="entry name" value="Auxin response factor"/>
    <property type="match status" value="1"/>
</dbReference>
<dbReference type="FunFam" id="3.10.20.90:FF:000047">
    <property type="entry name" value="Auxin response factor"/>
    <property type="match status" value="1"/>
</dbReference>
<dbReference type="Gene3D" id="2.30.30.1040">
    <property type="match status" value="1"/>
</dbReference>
<dbReference type="Gene3D" id="2.40.330.10">
    <property type="entry name" value="DNA-binding pseudobarrel domain"/>
    <property type="match status" value="1"/>
</dbReference>
<dbReference type="Gene3D" id="3.10.20.90">
    <property type="entry name" value="Phosphatidylinositol 3-kinase Catalytic Subunit, Chain A, domain 1"/>
    <property type="match status" value="1"/>
</dbReference>
<dbReference type="InterPro" id="IPR010525">
    <property type="entry name" value="ARF_dom"/>
</dbReference>
<dbReference type="InterPro" id="IPR044835">
    <property type="entry name" value="ARF_plant"/>
</dbReference>
<dbReference type="InterPro" id="IPR033389">
    <property type="entry name" value="AUX/IAA_dom"/>
</dbReference>
<dbReference type="InterPro" id="IPR003340">
    <property type="entry name" value="B3_DNA-bd"/>
</dbReference>
<dbReference type="InterPro" id="IPR015300">
    <property type="entry name" value="DNA-bd_pseudobarrel_sf"/>
</dbReference>
<dbReference type="InterPro" id="IPR053793">
    <property type="entry name" value="PB1-like"/>
</dbReference>
<dbReference type="PANTHER" id="PTHR31384:SF79">
    <property type="entry name" value="AUXIN RESPONSE FACTOR 2"/>
    <property type="match status" value="1"/>
</dbReference>
<dbReference type="PANTHER" id="PTHR31384">
    <property type="entry name" value="AUXIN RESPONSE FACTOR 4-RELATED"/>
    <property type="match status" value="1"/>
</dbReference>
<dbReference type="Pfam" id="PF06507">
    <property type="entry name" value="ARF_AD"/>
    <property type="match status" value="1"/>
</dbReference>
<dbReference type="Pfam" id="PF02309">
    <property type="entry name" value="AUX_IAA"/>
    <property type="match status" value="1"/>
</dbReference>
<dbReference type="Pfam" id="PF02362">
    <property type="entry name" value="B3"/>
    <property type="match status" value="1"/>
</dbReference>
<dbReference type="SMART" id="SM01019">
    <property type="entry name" value="B3"/>
    <property type="match status" value="1"/>
</dbReference>
<dbReference type="SUPFAM" id="SSF54277">
    <property type="entry name" value="CAD &amp; PB1 domains"/>
    <property type="match status" value="1"/>
</dbReference>
<dbReference type="SUPFAM" id="SSF101936">
    <property type="entry name" value="DNA-binding pseudobarrel domain"/>
    <property type="match status" value="1"/>
</dbReference>
<dbReference type="PROSITE" id="PS50863">
    <property type="entry name" value="B3"/>
    <property type="match status" value="1"/>
</dbReference>
<dbReference type="PROSITE" id="PS51745">
    <property type="entry name" value="PB1"/>
    <property type="match status" value="1"/>
</dbReference>